<reference key="1">
    <citation type="submission" date="2008-02" db="EMBL/GenBank/DDBJ databases">
        <title>Complete sequence of Yersinia pseudotuberculosis YPIII.</title>
        <authorList>
            <consortium name="US DOE Joint Genome Institute"/>
            <person name="Copeland A."/>
            <person name="Lucas S."/>
            <person name="Lapidus A."/>
            <person name="Glavina del Rio T."/>
            <person name="Dalin E."/>
            <person name="Tice H."/>
            <person name="Bruce D."/>
            <person name="Goodwin L."/>
            <person name="Pitluck S."/>
            <person name="Munk A.C."/>
            <person name="Brettin T."/>
            <person name="Detter J.C."/>
            <person name="Han C."/>
            <person name="Tapia R."/>
            <person name="Schmutz J."/>
            <person name="Larimer F."/>
            <person name="Land M."/>
            <person name="Hauser L."/>
            <person name="Challacombe J.F."/>
            <person name="Green L."/>
            <person name="Lindler L.E."/>
            <person name="Nikolich M.P."/>
            <person name="Richardson P."/>
        </authorList>
    </citation>
    <scope>NUCLEOTIDE SEQUENCE [LARGE SCALE GENOMIC DNA]</scope>
    <source>
        <strain>YPIII</strain>
    </source>
</reference>
<evidence type="ECO:0000255" key="1">
    <source>
        <dbReference type="HAMAP-Rule" id="MF_01618"/>
    </source>
</evidence>
<proteinExistence type="inferred from homology"/>
<keyword id="KW-0012">Acyltransferase</keyword>
<keyword id="KW-0963">Cytoplasm</keyword>
<keyword id="KW-0276">Fatty acid metabolism</keyword>
<keyword id="KW-0442">Lipid degradation</keyword>
<keyword id="KW-0443">Lipid metabolism</keyword>
<keyword id="KW-0808">Transferase</keyword>
<comment type="function">
    <text evidence="1">Catalyzes the final step of fatty acid oxidation in which acetyl-CoA is released and the CoA ester of a fatty acid two carbons shorter is formed.</text>
</comment>
<comment type="catalytic activity">
    <reaction evidence="1">
        <text>an acyl-CoA + acetyl-CoA = a 3-oxoacyl-CoA + CoA</text>
        <dbReference type="Rhea" id="RHEA:21564"/>
        <dbReference type="ChEBI" id="CHEBI:57287"/>
        <dbReference type="ChEBI" id="CHEBI:57288"/>
        <dbReference type="ChEBI" id="CHEBI:58342"/>
        <dbReference type="ChEBI" id="CHEBI:90726"/>
        <dbReference type="EC" id="2.3.1.16"/>
    </reaction>
</comment>
<comment type="pathway">
    <text evidence="1">Lipid metabolism; fatty acid beta-oxidation.</text>
</comment>
<comment type="subunit">
    <text evidence="1">Heterotetramer of two alpha chains (FadJ) and two beta chains (FadI).</text>
</comment>
<comment type="subcellular location">
    <subcellularLocation>
        <location evidence="1">Cytoplasm</location>
    </subcellularLocation>
</comment>
<comment type="similarity">
    <text evidence="1">Belongs to the thiolase-like superfamily. Thiolase family.</text>
</comment>
<name>FADI_YERPY</name>
<accession>B1JGG1</accession>
<sequence length="436" mass="46311">MSKPLPLVTRQGDRIVIVNGLRTPFAKQATAYHGVPAVDLGKIVVSELLARSGISSELIDQLVFGQVVQMPEAPNIAREIVLGTGMSVHTDAYSVSRACATSFQAVANVAESIIAGSVDIAIAGGADSSSVLPIGVSKALARTLVDANKARSLSQKLKLFSRLRLRDLLPVAPAVAEYSTGLRMGDTAEQMAKTYGISREDQDALALRSHQLAAEAWQQGWLHDEVMTAYIPPYREAIIEDNNIRKDSTLAQYAKLRPAFDRQHGSVTAANSTPLTDGAAAVLMMSESKAKALGLPPLGYLRSFAFSAIDVWQDMLLGPSYATPLALDRAGITLADLTLIDMHEAFAAQTLANLKMFASDTFAREKLGRSQAIGEVDMSKFNVLGGSIAYGHPFAATGARMITQTLNELRRRGGGLGLTTACAAGGLGAAMILEVE</sequence>
<feature type="chain" id="PRO_1000185986" description="3-ketoacyl-CoA thiolase">
    <location>
        <begin position="1"/>
        <end position="436"/>
    </location>
</feature>
<feature type="active site" description="Acyl-thioester intermediate" evidence="1">
    <location>
        <position position="99"/>
    </location>
</feature>
<feature type="active site" description="Proton acceptor" evidence="1">
    <location>
        <position position="392"/>
    </location>
</feature>
<feature type="active site" description="Proton acceptor" evidence="1">
    <location>
        <position position="422"/>
    </location>
</feature>
<dbReference type="EC" id="2.3.1.16" evidence="1"/>
<dbReference type="EMBL" id="CP000950">
    <property type="protein sequence ID" value="ACA67801.1"/>
    <property type="molecule type" value="Genomic_DNA"/>
</dbReference>
<dbReference type="RefSeq" id="WP_002209704.1">
    <property type="nucleotide sequence ID" value="NZ_CP009792.1"/>
</dbReference>
<dbReference type="SMR" id="B1JGG1"/>
<dbReference type="GeneID" id="57975943"/>
<dbReference type="KEGG" id="ypy:YPK_1508"/>
<dbReference type="PATRIC" id="fig|502800.11.peg.2147"/>
<dbReference type="UniPathway" id="UPA00659"/>
<dbReference type="GO" id="GO:0005829">
    <property type="term" value="C:cytosol"/>
    <property type="evidence" value="ECO:0007669"/>
    <property type="project" value="TreeGrafter"/>
</dbReference>
<dbReference type="GO" id="GO:0003988">
    <property type="term" value="F:acetyl-CoA C-acyltransferase activity"/>
    <property type="evidence" value="ECO:0007669"/>
    <property type="project" value="UniProtKB-UniRule"/>
</dbReference>
<dbReference type="GO" id="GO:0006635">
    <property type="term" value="P:fatty acid beta-oxidation"/>
    <property type="evidence" value="ECO:0007669"/>
    <property type="project" value="UniProtKB-UniRule"/>
</dbReference>
<dbReference type="CDD" id="cd00751">
    <property type="entry name" value="thiolase"/>
    <property type="match status" value="1"/>
</dbReference>
<dbReference type="FunFam" id="3.40.47.10:FF:000011">
    <property type="entry name" value="3-ketoacyl-CoA thiolase"/>
    <property type="match status" value="1"/>
</dbReference>
<dbReference type="Gene3D" id="3.40.47.10">
    <property type="match status" value="1"/>
</dbReference>
<dbReference type="HAMAP" id="MF_01618">
    <property type="entry name" value="FadI"/>
    <property type="match status" value="1"/>
</dbReference>
<dbReference type="InterPro" id="IPR012806">
    <property type="entry name" value="Ac-CoA_C-AcTrfase_FadI"/>
</dbReference>
<dbReference type="InterPro" id="IPR002155">
    <property type="entry name" value="Thiolase"/>
</dbReference>
<dbReference type="InterPro" id="IPR016039">
    <property type="entry name" value="Thiolase-like"/>
</dbReference>
<dbReference type="InterPro" id="IPR020615">
    <property type="entry name" value="Thiolase_acyl_enz_int_AS"/>
</dbReference>
<dbReference type="InterPro" id="IPR020610">
    <property type="entry name" value="Thiolase_AS"/>
</dbReference>
<dbReference type="InterPro" id="IPR020617">
    <property type="entry name" value="Thiolase_C"/>
</dbReference>
<dbReference type="InterPro" id="IPR020613">
    <property type="entry name" value="Thiolase_CS"/>
</dbReference>
<dbReference type="InterPro" id="IPR020616">
    <property type="entry name" value="Thiolase_N"/>
</dbReference>
<dbReference type="NCBIfam" id="TIGR01930">
    <property type="entry name" value="AcCoA-C-Actrans"/>
    <property type="match status" value="1"/>
</dbReference>
<dbReference type="NCBIfam" id="TIGR02446">
    <property type="entry name" value="FadI"/>
    <property type="match status" value="1"/>
</dbReference>
<dbReference type="NCBIfam" id="NF006516">
    <property type="entry name" value="PRK08963.1"/>
    <property type="match status" value="1"/>
</dbReference>
<dbReference type="PANTHER" id="PTHR18919:SF107">
    <property type="entry name" value="ACETYL-COA ACETYLTRANSFERASE, CYTOSOLIC"/>
    <property type="match status" value="1"/>
</dbReference>
<dbReference type="PANTHER" id="PTHR18919">
    <property type="entry name" value="ACETYL-COA C-ACYLTRANSFERASE"/>
    <property type="match status" value="1"/>
</dbReference>
<dbReference type="Pfam" id="PF02803">
    <property type="entry name" value="Thiolase_C"/>
    <property type="match status" value="1"/>
</dbReference>
<dbReference type="Pfam" id="PF00108">
    <property type="entry name" value="Thiolase_N"/>
    <property type="match status" value="1"/>
</dbReference>
<dbReference type="PIRSF" id="PIRSF000429">
    <property type="entry name" value="Ac-CoA_Ac_transf"/>
    <property type="match status" value="1"/>
</dbReference>
<dbReference type="SUPFAM" id="SSF53901">
    <property type="entry name" value="Thiolase-like"/>
    <property type="match status" value="2"/>
</dbReference>
<dbReference type="PROSITE" id="PS00098">
    <property type="entry name" value="THIOLASE_1"/>
    <property type="match status" value="1"/>
</dbReference>
<dbReference type="PROSITE" id="PS00737">
    <property type="entry name" value="THIOLASE_2"/>
    <property type="match status" value="1"/>
</dbReference>
<dbReference type="PROSITE" id="PS00099">
    <property type="entry name" value="THIOLASE_3"/>
    <property type="match status" value="1"/>
</dbReference>
<organism>
    <name type="scientific">Yersinia pseudotuberculosis serotype O:3 (strain YPIII)</name>
    <dbReference type="NCBI Taxonomy" id="502800"/>
    <lineage>
        <taxon>Bacteria</taxon>
        <taxon>Pseudomonadati</taxon>
        <taxon>Pseudomonadota</taxon>
        <taxon>Gammaproteobacteria</taxon>
        <taxon>Enterobacterales</taxon>
        <taxon>Yersiniaceae</taxon>
        <taxon>Yersinia</taxon>
    </lineage>
</organism>
<gene>
    <name evidence="1" type="primary">fadI</name>
    <name type="ordered locus">YPK_1508</name>
</gene>
<protein>
    <recommendedName>
        <fullName evidence="1">3-ketoacyl-CoA thiolase</fullName>
        <ecNumber evidence="1">2.3.1.16</ecNumber>
    </recommendedName>
    <alternativeName>
        <fullName evidence="1">ACSs</fullName>
    </alternativeName>
    <alternativeName>
        <fullName evidence="1">Acetyl-CoA acyltransferase</fullName>
    </alternativeName>
    <alternativeName>
        <fullName evidence="1">Acyl-CoA ligase</fullName>
    </alternativeName>
    <alternativeName>
        <fullName evidence="1">Beta-ketothiolase</fullName>
    </alternativeName>
    <alternativeName>
        <fullName evidence="1">Fatty acid oxidation complex subunit beta</fullName>
    </alternativeName>
</protein>